<organism>
    <name type="scientific">Allorhizobium ampelinum (strain ATCC BAA-846 / DSM 112012 / S4)</name>
    <name type="common">Agrobacterium vitis (strain S4)</name>
    <dbReference type="NCBI Taxonomy" id="311402"/>
    <lineage>
        <taxon>Bacteria</taxon>
        <taxon>Pseudomonadati</taxon>
        <taxon>Pseudomonadota</taxon>
        <taxon>Alphaproteobacteria</taxon>
        <taxon>Hyphomicrobiales</taxon>
        <taxon>Rhizobiaceae</taxon>
        <taxon>Rhizobium/Agrobacterium group</taxon>
        <taxon>Allorhizobium</taxon>
        <taxon>Allorhizobium ampelinum</taxon>
    </lineage>
</organism>
<gene>
    <name evidence="1" type="primary">serS</name>
    <name type="ordered locus">Avi_2665</name>
</gene>
<reference key="1">
    <citation type="journal article" date="2009" name="J. Bacteriol.">
        <title>Genome sequences of three Agrobacterium biovars help elucidate the evolution of multichromosome genomes in bacteria.</title>
        <authorList>
            <person name="Slater S.C."/>
            <person name="Goldman B.S."/>
            <person name="Goodner B."/>
            <person name="Setubal J.C."/>
            <person name="Farrand S.K."/>
            <person name="Nester E.W."/>
            <person name="Burr T.J."/>
            <person name="Banta L."/>
            <person name="Dickerman A.W."/>
            <person name="Paulsen I."/>
            <person name="Otten L."/>
            <person name="Suen G."/>
            <person name="Welch R."/>
            <person name="Almeida N.F."/>
            <person name="Arnold F."/>
            <person name="Burton O.T."/>
            <person name="Du Z."/>
            <person name="Ewing A."/>
            <person name="Godsy E."/>
            <person name="Heisel S."/>
            <person name="Houmiel K.L."/>
            <person name="Jhaveri J."/>
            <person name="Lu J."/>
            <person name="Miller N.M."/>
            <person name="Norton S."/>
            <person name="Chen Q."/>
            <person name="Phoolcharoen W."/>
            <person name="Ohlin V."/>
            <person name="Ondrusek D."/>
            <person name="Pride N."/>
            <person name="Stricklin S.L."/>
            <person name="Sun J."/>
            <person name="Wheeler C."/>
            <person name="Wilson L."/>
            <person name="Zhu H."/>
            <person name="Wood D.W."/>
        </authorList>
    </citation>
    <scope>NUCLEOTIDE SEQUENCE [LARGE SCALE GENOMIC DNA]</scope>
    <source>
        <strain>ATCC BAA-846 / DSM 112012 / S4</strain>
    </source>
</reference>
<sequence length="427" mass="47189">MLDIKWIRENPELLDQALAKRGAEPLSQSLIALDEQRRAVVQDMQDMQSRRNSASKEIGAAMAQKDMALAEKLKAEVASLKDTLPAAEEDERRLSAELTDALSRIPNIPLDDVPVGADEHDNVVARVVGQKPGWNHTAIEHPEIGEALGYMDFDRAAKLSGARFTVLTGPLARLERALGQFMIDLHTSEHGYTEVSSPLMVRDEAMYGTGQLPKFSEELFKTTDGRWLIPTAEVTLTNLVSGEILDQEKLPLRFTALTPSFRSEAGSAGRDTRGMLRQHQFWKCELVSITDAQSALAEHERMTACAEEVLKRLGLHFRTMTLCTGDMGFGAAKTYDLEVWLPGQNTFREISSCSVCGDFQGRRMNARYRNKDGKGTTFVHTLNGSGTAVGRCLIAVMENYLNEDGSITVPDVLLPYMGGLTRIEKAS</sequence>
<proteinExistence type="inferred from homology"/>
<dbReference type="EC" id="6.1.1.11" evidence="1"/>
<dbReference type="EMBL" id="CP000633">
    <property type="protein sequence ID" value="ACM36916.1"/>
    <property type="molecule type" value="Genomic_DNA"/>
</dbReference>
<dbReference type="RefSeq" id="WP_015916337.1">
    <property type="nucleotide sequence ID" value="NC_011989.1"/>
</dbReference>
<dbReference type="SMR" id="B9JXD8"/>
<dbReference type="STRING" id="311402.Avi_2665"/>
<dbReference type="KEGG" id="avi:Avi_2665"/>
<dbReference type="eggNOG" id="COG0172">
    <property type="taxonomic scope" value="Bacteria"/>
</dbReference>
<dbReference type="HOGENOM" id="CLU_023797_1_1_5"/>
<dbReference type="UniPathway" id="UPA00906">
    <property type="reaction ID" value="UER00895"/>
</dbReference>
<dbReference type="Proteomes" id="UP000001596">
    <property type="component" value="Chromosome 1"/>
</dbReference>
<dbReference type="GO" id="GO:0005737">
    <property type="term" value="C:cytoplasm"/>
    <property type="evidence" value="ECO:0007669"/>
    <property type="project" value="UniProtKB-SubCell"/>
</dbReference>
<dbReference type="GO" id="GO:0005524">
    <property type="term" value="F:ATP binding"/>
    <property type="evidence" value="ECO:0007669"/>
    <property type="project" value="UniProtKB-UniRule"/>
</dbReference>
<dbReference type="GO" id="GO:0004828">
    <property type="term" value="F:serine-tRNA ligase activity"/>
    <property type="evidence" value="ECO:0007669"/>
    <property type="project" value="UniProtKB-UniRule"/>
</dbReference>
<dbReference type="GO" id="GO:0016260">
    <property type="term" value="P:selenocysteine biosynthetic process"/>
    <property type="evidence" value="ECO:0007669"/>
    <property type="project" value="UniProtKB-UniRule"/>
</dbReference>
<dbReference type="GO" id="GO:0006434">
    <property type="term" value="P:seryl-tRNA aminoacylation"/>
    <property type="evidence" value="ECO:0007669"/>
    <property type="project" value="UniProtKB-UniRule"/>
</dbReference>
<dbReference type="CDD" id="cd00770">
    <property type="entry name" value="SerRS_core"/>
    <property type="match status" value="1"/>
</dbReference>
<dbReference type="Gene3D" id="3.30.930.10">
    <property type="entry name" value="Bira Bifunctional Protein, Domain 2"/>
    <property type="match status" value="1"/>
</dbReference>
<dbReference type="Gene3D" id="1.10.287.40">
    <property type="entry name" value="Serine-tRNA synthetase, tRNA binding domain"/>
    <property type="match status" value="1"/>
</dbReference>
<dbReference type="HAMAP" id="MF_00176">
    <property type="entry name" value="Ser_tRNA_synth_type1"/>
    <property type="match status" value="1"/>
</dbReference>
<dbReference type="InterPro" id="IPR002314">
    <property type="entry name" value="aa-tRNA-synt_IIb"/>
</dbReference>
<dbReference type="InterPro" id="IPR006195">
    <property type="entry name" value="aa-tRNA-synth_II"/>
</dbReference>
<dbReference type="InterPro" id="IPR045864">
    <property type="entry name" value="aa-tRNA-synth_II/BPL/LPL"/>
</dbReference>
<dbReference type="InterPro" id="IPR002317">
    <property type="entry name" value="Ser-tRNA-ligase_type_1"/>
</dbReference>
<dbReference type="InterPro" id="IPR015866">
    <property type="entry name" value="Ser-tRNA-synth_1_N"/>
</dbReference>
<dbReference type="InterPro" id="IPR042103">
    <property type="entry name" value="SerRS_1_N_sf"/>
</dbReference>
<dbReference type="InterPro" id="IPR033729">
    <property type="entry name" value="SerRS_core"/>
</dbReference>
<dbReference type="InterPro" id="IPR010978">
    <property type="entry name" value="tRNA-bd_arm"/>
</dbReference>
<dbReference type="NCBIfam" id="TIGR00414">
    <property type="entry name" value="serS"/>
    <property type="match status" value="1"/>
</dbReference>
<dbReference type="PANTHER" id="PTHR43697:SF1">
    <property type="entry name" value="SERINE--TRNA LIGASE"/>
    <property type="match status" value="1"/>
</dbReference>
<dbReference type="PANTHER" id="PTHR43697">
    <property type="entry name" value="SERYL-TRNA SYNTHETASE"/>
    <property type="match status" value="1"/>
</dbReference>
<dbReference type="Pfam" id="PF02403">
    <property type="entry name" value="Seryl_tRNA_N"/>
    <property type="match status" value="1"/>
</dbReference>
<dbReference type="Pfam" id="PF00587">
    <property type="entry name" value="tRNA-synt_2b"/>
    <property type="match status" value="1"/>
</dbReference>
<dbReference type="PIRSF" id="PIRSF001529">
    <property type="entry name" value="Ser-tRNA-synth_IIa"/>
    <property type="match status" value="1"/>
</dbReference>
<dbReference type="PRINTS" id="PR00981">
    <property type="entry name" value="TRNASYNTHSER"/>
</dbReference>
<dbReference type="SUPFAM" id="SSF55681">
    <property type="entry name" value="Class II aaRS and biotin synthetases"/>
    <property type="match status" value="1"/>
</dbReference>
<dbReference type="SUPFAM" id="SSF46589">
    <property type="entry name" value="tRNA-binding arm"/>
    <property type="match status" value="1"/>
</dbReference>
<dbReference type="PROSITE" id="PS50862">
    <property type="entry name" value="AA_TRNA_LIGASE_II"/>
    <property type="match status" value="1"/>
</dbReference>
<name>SYS_ALLAM</name>
<feature type="chain" id="PRO_1000123863" description="Serine--tRNA ligase">
    <location>
        <begin position="1"/>
        <end position="427"/>
    </location>
</feature>
<feature type="binding site" evidence="1">
    <location>
        <begin position="231"/>
        <end position="233"/>
    </location>
    <ligand>
        <name>L-serine</name>
        <dbReference type="ChEBI" id="CHEBI:33384"/>
    </ligand>
</feature>
<feature type="binding site" evidence="1">
    <location>
        <begin position="262"/>
        <end position="264"/>
    </location>
    <ligand>
        <name>ATP</name>
        <dbReference type="ChEBI" id="CHEBI:30616"/>
    </ligand>
</feature>
<feature type="binding site" evidence="1">
    <location>
        <position position="285"/>
    </location>
    <ligand>
        <name>L-serine</name>
        <dbReference type="ChEBI" id="CHEBI:33384"/>
    </ligand>
</feature>
<feature type="binding site" evidence="1">
    <location>
        <begin position="349"/>
        <end position="352"/>
    </location>
    <ligand>
        <name>ATP</name>
        <dbReference type="ChEBI" id="CHEBI:30616"/>
    </ligand>
</feature>
<feature type="binding site" evidence="1">
    <location>
        <position position="385"/>
    </location>
    <ligand>
        <name>L-serine</name>
        <dbReference type="ChEBI" id="CHEBI:33384"/>
    </ligand>
</feature>
<keyword id="KW-0030">Aminoacyl-tRNA synthetase</keyword>
<keyword id="KW-0067">ATP-binding</keyword>
<keyword id="KW-0963">Cytoplasm</keyword>
<keyword id="KW-0436">Ligase</keyword>
<keyword id="KW-0547">Nucleotide-binding</keyword>
<keyword id="KW-0648">Protein biosynthesis</keyword>
<keyword id="KW-1185">Reference proteome</keyword>
<accession>B9JXD8</accession>
<evidence type="ECO:0000255" key="1">
    <source>
        <dbReference type="HAMAP-Rule" id="MF_00176"/>
    </source>
</evidence>
<protein>
    <recommendedName>
        <fullName evidence="1">Serine--tRNA ligase</fullName>
        <ecNumber evidence="1">6.1.1.11</ecNumber>
    </recommendedName>
    <alternativeName>
        <fullName evidence="1">Seryl-tRNA synthetase</fullName>
        <shortName evidence="1">SerRS</shortName>
    </alternativeName>
    <alternativeName>
        <fullName evidence="1">Seryl-tRNA(Ser/Sec) synthetase</fullName>
    </alternativeName>
</protein>
<comment type="function">
    <text evidence="1">Catalyzes the attachment of serine to tRNA(Ser). Is also able to aminoacylate tRNA(Sec) with serine, to form the misacylated tRNA L-seryl-tRNA(Sec), which will be further converted into selenocysteinyl-tRNA(Sec).</text>
</comment>
<comment type="catalytic activity">
    <reaction evidence="1">
        <text>tRNA(Ser) + L-serine + ATP = L-seryl-tRNA(Ser) + AMP + diphosphate + H(+)</text>
        <dbReference type="Rhea" id="RHEA:12292"/>
        <dbReference type="Rhea" id="RHEA-COMP:9669"/>
        <dbReference type="Rhea" id="RHEA-COMP:9703"/>
        <dbReference type="ChEBI" id="CHEBI:15378"/>
        <dbReference type="ChEBI" id="CHEBI:30616"/>
        <dbReference type="ChEBI" id="CHEBI:33019"/>
        <dbReference type="ChEBI" id="CHEBI:33384"/>
        <dbReference type="ChEBI" id="CHEBI:78442"/>
        <dbReference type="ChEBI" id="CHEBI:78533"/>
        <dbReference type="ChEBI" id="CHEBI:456215"/>
        <dbReference type="EC" id="6.1.1.11"/>
    </reaction>
</comment>
<comment type="catalytic activity">
    <reaction evidence="1">
        <text>tRNA(Sec) + L-serine + ATP = L-seryl-tRNA(Sec) + AMP + diphosphate + H(+)</text>
        <dbReference type="Rhea" id="RHEA:42580"/>
        <dbReference type="Rhea" id="RHEA-COMP:9742"/>
        <dbReference type="Rhea" id="RHEA-COMP:10128"/>
        <dbReference type="ChEBI" id="CHEBI:15378"/>
        <dbReference type="ChEBI" id="CHEBI:30616"/>
        <dbReference type="ChEBI" id="CHEBI:33019"/>
        <dbReference type="ChEBI" id="CHEBI:33384"/>
        <dbReference type="ChEBI" id="CHEBI:78442"/>
        <dbReference type="ChEBI" id="CHEBI:78533"/>
        <dbReference type="ChEBI" id="CHEBI:456215"/>
        <dbReference type="EC" id="6.1.1.11"/>
    </reaction>
</comment>
<comment type="pathway">
    <text evidence="1">Aminoacyl-tRNA biosynthesis; selenocysteinyl-tRNA(Sec) biosynthesis; L-seryl-tRNA(Sec) from L-serine and tRNA(Sec): step 1/1.</text>
</comment>
<comment type="subunit">
    <text evidence="1">Homodimer. The tRNA molecule binds across the dimer.</text>
</comment>
<comment type="subcellular location">
    <subcellularLocation>
        <location evidence="1">Cytoplasm</location>
    </subcellularLocation>
</comment>
<comment type="domain">
    <text evidence="1">Consists of two distinct domains, a catalytic core and a N-terminal extension that is involved in tRNA binding.</text>
</comment>
<comment type="similarity">
    <text evidence="1">Belongs to the class-II aminoacyl-tRNA synthetase family. Type-1 seryl-tRNA synthetase subfamily.</text>
</comment>